<keyword id="KW-0119">Carbohydrate metabolism</keyword>
<keyword id="KW-0325">Glycoprotein</keyword>
<keyword id="KW-0326">Glycosidase</keyword>
<keyword id="KW-0378">Hydrolase</keyword>
<keyword id="KW-0624">Polysaccharide degradation</keyword>
<keyword id="KW-1185">Reference proteome</keyword>
<keyword id="KW-0964">Secreted</keyword>
<keyword id="KW-0732">Signal</keyword>
<keyword id="KW-0858">Xylan degradation</keyword>
<evidence type="ECO:0000250" key="1"/>
<evidence type="ECO:0000255" key="2"/>
<evidence type="ECO:0000305" key="3"/>
<accession>A1CC12</accession>
<feature type="signal peptide" evidence="2">
    <location>
        <begin position="1"/>
        <end position="19"/>
    </location>
</feature>
<feature type="chain" id="PRO_0000393485" description="Probable alpha-glucuronidase A">
    <location>
        <begin position="20"/>
        <end position="840"/>
    </location>
</feature>
<feature type="glycosylation site" description="N-linked (GlcNAc...) asparagine" evidence="2">
    <location>
        <position position="222"/>
    </location>
</feature>
<feature type="glycosylation site" description="N-linked (GlcNAc...) asparagine" evidence="2">
    <location>
        <position position="310"/>
    </location>
</feature>
<feature type="glycosylation site" description="N-linked (GlcNAc...) asparagine" evidence="2">
    <location>
        <position position="465"/>
    </location>
</feature>
<feature type="glycosylation site" description="N-linked (GlcNAc...) asparagine" evidence="2">
    <location>
        <position position="527"/>
    </location>
</feature>
<feature type="glycosylation site" description="N-linked (GlcNAc...) asparagine" evidence="2">
    <location>
        <position position="576"/>
    </location>
</feature>
<feature type="glycosylation site" description="N-linked (GlcNAc...) asparagine" evidence="2">
    <location>
        <position position="682"/>
    </location>
</feature>
<feature type="glycosylation site" description="N-linked (GlcNAc...) asparagine" evidence="2">
    <location>
        <position position="732"/>
    </location>
</feature>
<comment type="function">
    <text evidence="1">Alpha-glucuronidase involved in the hydrolysis of xylan, a major structural heterogeneous polysaccharide found in plant biomass representing the second most abundant polysaccharide in the biosphere, after cellulose. Releases 4-O-methylglucuronic acid from xylan (By similarity).</text>
</comment>
<comment type="catalytic activity">
    <reaction>
        <text>an alpha-D-glucuronoside + H2O = D-glucuronate + an alcohol</text>
        <dbReference type="Rhea" id="RHEA:20005"/>
        <dbReference type="ChEBI" id="CHEBI:15377"/>
        <dbReference type="ChEBI" id="CHEBI:30879"/>
        <dbReference type="ChEBI" id="CHEBI:58720"/>
        <dbReference type="ChEBI" id="CHEBI:58899"/>
        <dbReference type="EC" id="3.2.1.139"/>
    </reaction>
</comment>
<comment type="subcellular location">
    <subcellularLocation>
        <location evidence="1">Secreted</location>
    </subcellularLocation>
</comment>
<comment type="similarity">
    <text evidence="3">Belongs to the glycosyl hydrolase 67 family.</text>
</comment>
<protein>
    <recommendedName>
        <fullName>Probable alpha-glucuronidase A</fullName>
        <ecNumber>3.2.1.139</ecNumber>
    </recommendedName>
    <alternativeName>
        <fullName>Alpha-glucosiduronase A</fullName>
    </alternativeName>
</protein>
<gene>
    <name type="primary">aguA</name>
    <name type="ORF">ACLA_017270</name>
</gene>
<name>AGUA_ASPCL</name>
<reference key="1">
    <citation type="journal article" date="2008" name="PLoS Genet.">
        <title>Genomic islands in the pathogenic filamentous fungus Aspergillus fumigatus.</title>
        <authorList>
            <person name="Fedorova N.D."/>
            <person name="Khaldi N."/>
            <person name="Joardar V.S."/>
            <person name="Maiti R."/>
            <person name="Amedeo P."/>
            <person name="Anderson M.J."/>
            <person name="Crabtree J."/>
            <person name="Silva J.C."/>
            <person name="Badger J.H."/>
            <person name="Albarraq A."/>
            <person name="Angiuoli S."/>
            <person name="Bussey H."/>
            <person name="Bowyer P."/>
            <person name="Cotty P.J."/>
            <person name="Dyer P.S."/>
            <person name="Egan A."/>
            <person name="Galens K."/>
            <person name="Fraser-Liggett C.M."/>
            <person name="Haas B.J."/>
            <person name="Inman J.M."/>
            <person name="Kent R."/>
            <person name="Lemieux S."/>
            <person name="Malavazi I."/>
            <person name="Orvis J."/>
            <person name="Roemer T."/>
            <person name="Ronning C.M."/>
            <person name="Sundaram J.P."/>
            <person name="Sutton G."/>
            <person name="Turner G."/>
            <person name="Venter J.C."/>
            <person name="White O.R."/>
            <person name="Whitty B.R."/>
            <person name="Youngman P."/>
            <person name="Wolfe K.H."/>
            <person name="Goldman G.H."/>
            <person name="Wortman J.R."/>
            <person name="Jiang B."/>
            <person name="Denning D.W."/>
            <person name="Nierman W.C."/>
        </authorList>
    </citation>
    <scope>NUCLEOTIDE SEQUENCE [LARGE SCALE GENOMIC DNA]</scope>
    <source>
        <strain>ATCC 1007 / CBS 513.65 / DSM 816 / NCTC 3887 / NRRL 1 / QM 1276 / 107</strain>
    </source>
</reference>
<sequence length="840" mass="93928">MRSVITTLTLVASVGLAVAENGFDGWLRYAPVSCHGACQKSLPSHIVTLDPTESSPISVAGQEIQDGLQRMFKMHATVEPKGCSTRSSVIIGTLDAYNHACKDADPVPELEEDGFWLNTKDGKVQIIGQSERGALYGAYEYLSMLSQGNFAPVSYTTSPHAPIRWVNQWDNMDGSMEHGYGGLSIFFKDGVIPQDLSRVKQYARLLASIRINGIIVNNVNANASLLKPENMDGLARIADIFRPYGVKVGISLNFASPSTLGGLNTYDPLDESVISWWGGITDELYKRVPDMAGYLVKANSEGQPGPTTYNRTLAEGANLFARALKPHGGIVMFRAFVYDHHISEENWYNDRANAAVDFFKPLDGKFEENVVVQIKYGPIDFQVREPVSPLFANLYKTNTAIELQVTQEYLGQQSHLVYLPPLWQTILGFDLRVDGKPSPTRDIISGQRFNRPLGGWAAVVNVGTNTTWLGSHLALSNLYAYGRLAWEPTLDSQDILQDWIRMTFGLDRRVLDTITKMSMESWPAYENYSGNLGIQTLTDILYTHYGPNPASQDGNGWGQWTRADHEAIGMDRTIKNGTKFTGQYPAEVAQVYENIETTPDDLLLWFHHVPYTQRLQSGKTVIQHFYDAHYAGADTAQTFVSQWESLRGKIDPERYEHVLTRLIYQAGHSIVWRDAINEFYHNLSGIADEKQRVGHHPWRIEAEDMKLDGYVPYDVNPFETASNTKAIVTATNSTTGTASTQLDFKTGKYDLGINYYDFYGGKSQWTAYLNDRLVGQWQGNNEDVLSHELSVYLDGHSATRITFRDVKIHKGDRLKIVGKPDGMEPAPLDYVVLLPQGIVD</sequence>
<proteinExistence type="inferred from homology"/>
<dbReference type="EC" id="3.2.1.139"/>
<dbReference type="EMBL" id="DS027049">
    <property type="protein sequence ID" value="EAW13280.1"/>
    <property type="molecule type" value="Genomic_DNA"/>
</dbReference>
<dbReference type="RefSeq" id="XP_001274706.1">
    <property type="nucleotide sequence ID" value="XM_001274705.1"/>
</dbReference>
<dbReference type="SMR" id="A1CC12"/>
<dbReference type="STRING" id="344612.A1CC12"/>
<dbReference type="GlyCosmos" id="A1CC12">
    <property type="glycosylation" value="7 sites, No reported glycans"/>
</dbReference>
<dbReference type="EnsemblFungi" id="EAW13280">
    <property type="protein sequence ID" value="EAW13280"/>
    <property type="gene ID" value="ACLA_017270"/>
</dbReference>
<dbReference type="GeneID" id="4706795"/>
<dbReference type="KEGG" id="act:ACLA_017270"/>
<dbReference type="VEuPathDB" id="FungiDB:ACLA_017270"/>
<dbReference type="eggNOG" id="ENOG502QWS4">
    <property type="taxonomic scope" value="Eukaryota"/>
</dbReference>
<dbReference type="HOGENOM" id="CLU_007125_2_0_1"/>
<dbReference type="OMA" id="IWRAFVY"/>
<dbReference type="OrthoDB" id="6501611at2759"/>
<dbReference type="Proteomes" id="UP000006701">
    <property type="component" value="Unassembled WGS sequence"/>
</dbReference>
<dbReference type="GO" id="GO:0005576">
    <property type="term" value="C:extracellular region"/>
    <property type="evidence" value="ECO:0007669"/>
    <property type="project" value="UniProtKB-SubCell"/>
</dbReference>
<dbReference type="GO" id="GO:0046559">
    <property type="term" value="F:alpha-glucuronidase activity"/>
    <property type="evidence" value="ECO:0007669"/>
    <property type="project" value="UniProtKB-EC"/>
</dbReference>
<dbReference type="GO" id="GO:0045493">
    <property type="term" value="P:xylan catabolic process"/>
    <property type="evidence" value="ECO:0007669"/>
    <property type="project" value="UniProtKB-KW"/>
</dbReference>
<dbReference type="CDD" id="cd02795">
    <property type="entry name" value="CBM6-CBM35-CBM36_like"/>
    <property type="match status" value="1"/>
</dbReference>
<dbReference type="FunFam" id="3.20.20.80:FF:000096">
    <property type="entry name" value="Xylan alpha-1,2-glucuronidase"/>
    <property type="match status" value="1"/>
</dbReference>
<dbReference type="FunFam" id="3.90.1330.10:FF:000001">
    <property type="entry name" value="Xylan alpha-1,2-glucuronidase"/>
    <property type="match status" value="1"/>
</dbReference>
<dbReference type="Gene3D" id="3.90.1330.10">
    <property type="entry name" value="Alpha-glucuronidase, C-terminal domain"/>
    <property type="match status" value="1"/>
</dbReference>
<dbReference type="Gene3D" id="3.30.379.10">
    <property type="entry name" value="Chitobiase/beta-hexosaminidase domain 2-like"/>
    <property type="match status" value="1"/>
</dbReference>
<dbReference type="Gene3D" id="3.20.20.80">
    <property type="entry name" value="Glycosidases"/>
    <property type="match status" value="1"/>
</dbReference>
<dbReference type="InterPro" id="IPR037054">
    <property type="entry name" value="A-glucoronidase_C_sf"/>
</dbReference>
<dbReference type="InterPro" id="IPR011395">
    <property type="entry name" value="Glyco_hydro_67_aGlcAse"/>
</dbReference>
<dbReference type="InterPro" id="IPR005154">
    <property type="entry name" value="Glyco_hydro_67_aGlcAse_N"/>
</dbReference>
<dbReference type="InterPro" id="IPR011099">
    <property type="entry name" value="Glyco_hydro_67_C"/>
</dbReference>
<dbReference type="InterPro" id="IPR011100">
    <property type="entry name" value="Glyco_hydro_67_cat"/>
</dbReference>
<dbReference type="InterPro" id="IPR017853">
    <property type="entry name" value="Glycoside_hydrolase_SF"/>
</dbReference>
<dbReference type="InterPro" id="IPR029018">
    <property type="entry name" value="Hex-like_dom2"/>
</dbReference>
<dbReference type="PANTHER" id="PTHR39207">
    <property type="entry name" value="ALPHA-GLUCURONIDASE A"/>
    <property type="match status" value="1"/>
</dbReference>
<dbReference type="PANTHER" id="PTHR39207:SF1">
    <property type="entry name" value="ALPHA-GLUCURONIDASE A"/>
    <property type="match status" value="1"/>
</dbReference>
<dbReference type="Pfam" id="PF07477">
    <property type="entry name" value="Glyco_hydro_67C"/>
    <property type="match status" value="1"/>
</dbReference>
<dbReference type="Pfam" id="PF07488">
    <property type="entry name" value="Glyco_hydro_67M"/>
    <property type="match status" value="1"/>
</dbReference>
<dbReference type="Pfam" id="PF03648">
    <property type="entry name" value="Glyco_hydro_67N"/>
    <property type="match status" value="1"/>
</dbReference>
<dbReference type="PIRSF" id="PIRSF029900">
    <property type="entry name" value="Alpha-glucuronds"/>
    <property type="match status" value="1"/>
</dbReference>
<dbReference type="SUPFAM" id="SSF51445">
    <property type="entry name" value="(Trans)glycosidases"/>
    <property type="match status" value="1"/>
</dbReference>
<dbReference type="SUPFAM" id="SSF55545">
    <property type="entry name" value="beta-N-acetylhexosaminidase-like domain"/>
    <property type="match status" value="1"/>
</dbReference>
<organism>
    <name type="scientific">Aspergillus clavatus (strain ATCC 1007 / CBS 513.65 / DSM 816 / NCTC 3887 / NRRL 1 / QM 1276 / 107)</name>
    <dbReference type="NCBI Taxonomy" id="344612"/>
    <lineage>
        <taxon>Eukaryota</taxon>
        <taxon>Fungi</taxon>
        <taxon>Dikarya</taxon>
        <taxon>Ascomycota</taxon>
        <taxon>Pezizomycotina</taxon>
        <taxon>Eurotiomycetes</taxon>
        <taxon>Eurotiomycetidae</taxon>
        <taxon>Eurotiales</taxon>
        <taxon>Aspergillaceae</taxon>
        <taxon>Aspergillus</taxon>
        <taxon>Aspergillus subgen. Fumigati</taxon>
    </lineage>
</organism>